<evidence type="ECO:0000255" key="1"/>
<evidence type="ECO:0000255" key="2">
    <source>
        <dbReference type="PROSITE-ProRule" id="PRU00198"/>
    </source>
</evidence>
<evidence type="ECO:0000305" key="3"/>
<accession>P9WGF6</accession>
<accession>L0T947</accession>
<accession>P71997</accession>
<accession>Q7D819</accession>
<gene>
    <name type="ordered locus">MT1781</name>
</gene>
<name>Y1739_MYCTO</name>
<feature type="chain" id="PRO_0000428370" description="Probable sulfate transporter MT1781">
    <location>
        <begin position="1"/>
        <end position="560"/>
    </location>
</feature>
<feature type="transmembrane region" description="Helical" evidence="1">
    <location>
        <begin position="29"/>
        <end position="49"/>
    </location>
</feature>
<feature type="transmembrane region" description="Helical" evidence="1">
    <location>
        <begin position="51"/>
        <end position="71"/>
    </location>
</feature>
<feature type="transmembrane region" description="Helical" evidence="1">
    <location>
        <begin position="79"/>
        <end position="99"/>
    </location>
</feature>
<feature type="transmembrane region" description="Helical" evidence="1">
    <location>
        <begin position="105"/>
        <end position="125"/>
    </location>
</feature>
<feature type="transmembrane region" description="Helical" evidence="1">
    <location>
        <begin position="138"/>
        <end position="158"/>
    </location>
</feature>
<feature type="transmembrane region" description="Helical" evidence="1">
    <location>
        <begin position="184"/>
        <end position="204"/>
    </location>
</feature>
<feature type="transmembrane region" description="Helical" evidence="1">
    <location>
        <begin position="207"/>
        <end position="227"/>
    </location>
</feature>
<feature type="transmembrane region" description="Helical" evidence="1">
    <location>
        <begin position="256"/>
        <end position="276"/>
    </location>
</feature>
<feature type="transmembrane region" description="Helical" evidence="1">
    <location>
        <begin position="333"/>
        <end position="353"/>
    </location>
</feature>
<feature type="transmembrane region" description="Helical" evidence="1">
    <location>
        <begin position="355"/>
        <end position="375"/>
    </location>
</feature>
<feature type="transmembrane region" description="Helical" evidence="1">
    <location>
        <begin position="394"/>
        <end position="414"/>
    </location>
</feature>
<feature type="domain" description="STAS" evidence="2">
    <location>
        <begin position="442"/>
        <end position="557"/>
    </location>
</feature>
<sequence>MIPTMTSAGWAPGVVQFREYQRRWLRGDVLAGLTVAAYLIPQAMAYATVAGLPPAAGLWASIAPLAIYALLGSSRQLSIGPESATALMTAAVLAPMAAGDLRRYAVLAATLGLLVGLICLLAGTARLGFLASLLSRPVLVGYMAGIALVMISSQLGTITGTSVEGNEFFSEVHSFATSVTRVHWPTFVLAMSVLALLTMLTRWAPRAPGPIIAVLAATMLVAVMSLDAKGIAIVGRIPSGLPTPGVPPVSVEDLRALIIPAAGIAIVTFTDGVLTARAFAARRGQEVNANAELRAVGACNIAAGLTHGFPVSSSSSRTALADVVGGRTQLYSLIALGLVVIVMVFASGLLAMFPIAALGALVVYAALRLIDLSEFRRLARFRRSELMLALATTAAVLGLGVFYGVLAAVALSILELLRRVAHPHDSVLGFVPGIAGMHDIDDYPQAKRVPGLVVYRYDAPLCFANAEDFRRRALTVVDQDPGQVEWFVLNAESNVEVDLTALDALDQLRTELLRRGIVFAMARVKQDLRESLRAASLLDKIGEDHIFMTLPTAVQAFRRR</sequence>
<proteinExistence type="inferred from homology"/>
<dbReference type="EMBL" id="AE000516">
    <property type="protein sequence ID" value="AAK46054.1"/>
    <property type="molecule type" value="Genomic_DNA"/>
</dbReference>
<dbReference type="PIR" id="F70688">
    <property type="entry name" value="F70688"/>
</dbReference>
<dbReference type="RefSeq" id="WP_003898994.1">
    <property type="nucleotide sequence ID" value="NZ_KK341227.1"/>
</dbReference>
<dbReference type="BMRB" id="P9WGF6"/>
<dbReference type="SMR" id="P9WGF6"/>
<dbReference type="KEGG" id="mtc:MT1781"/>
<dbReference type="PATRIC" id="fig|83331.31.peg.1911"/>
<dbReference type="HOGENOM" id="CLU_003182_13_0_11"/>
<dbReference type="Proteomes" id="UP000001020">
    <property type="component" value="Chromosome"/>
</dbReference>
<dbReference type="GO" id="GO:0005886">
    <property type="term" value="C:plasma membrane"/>
    <property type="evidence" value="ECO:0007669"/>
    <property type="project" value="UniProtKB-SubCell"/>
</dbReference>
<dbReference type="GO" id="GO:0055085">
    <property type="term" value="P:transmembrane transport"/>
    <property type="evidence" value="ECO:0007669"/>
    <property type="project" value="InterPro"/>
</dbReference>
<dbReference type="CDD" id="cd07042">
    <property type="entry name" value="STAS_SulP_like_sulfate_transporter"/>
    <property type="match status" value="1"/>
</dbReference>
<dbReference type="Gene3D" id="3.30.750.24">
    <property type="entry name" value="STAS domain"/>
    <property type="match status" value="1"/>
</dbReference>
<dbReference type="InterPro" id="IPR011547">
    <property type="entry name" value="SLC26A/SulP_dom"/>
</dbReference>
<dbReference type="InterPro" id="IPR001902">
    <property type="entry name" value="SLC26A/SulP_fam"/>
</dbReference>
<dbReference type="InterPro" id="IPR002645">
    <property type="entry name" value="STAS_dom"/>
</dbReference>
<dbReference type="InterPro" id="IPR036513">
    <property type="entry name" value="STAS_dom_sf"/>
</dbReference>
<dbReference type="NCBIfam" id="TIGR00815">
    <property type="entry name" value="sulP"/>
    <property type="match status" value="1"/>
</dbReference>
<dbReference type="PANTHER" id="PTHR11814">
    <property type="entry name" value="SULFATE TRANSPORTER"/>
    <property type="match status" value="1"/>
</dbReference>
<dbReference type="Pfam" id="PF01740">
    <property type="entry name" value="STAS"/>
    <property type="match status" value="1"/>
</dbReference>
<dbReference type="Pfam" id="PF00916">
    <property type="entry name" value="Sulfate_transp"/>
    <property type="match status" value="1"/>
</dbReference>
<dbReference type="SUPFAM" id="SSF52091">
    <property type="entry name" value="SpoIIaa-like"/>
    <property type="match status" value="1"/>
</dbReference>
<dbReference type="PROSITE" id="PS00211">
    <property type="entry name" value="ABC_TRANSPORTER_1"/>
    <property type="match status" value="1"/>
</dbReference>
<dbReference type="PROSITE" id="PS50801">
    <property type="entry name" value="STAS"/>
    <property type="match status" value="1"/>
</dbReference>
<organism>
    <name type="scientific">Mycobacterium tuberculosis (strain CDC 1551 / Oshkosh)</name>
    <dbReference type="NCBI Taxonomy" id="83331"/>
    <lineage>
        <taxon>Bacteria</taxon>
        <taxon>Bacillati</taxon>
        <taxon>Actinomycetota</taxon>
        <taxon>Actinomycetes</taxon>
        <taxon>Mycobacteriales</taxon>
        <taxon>Mycobacteriaceae</taxon>
        <taxon>Mycobacterium</taxon>
        <taxon>Mycobacterium tuberculosis complex</taxon>
    </lineage>
</organism>
<keyword id="KW-1003">Cell membrane</keyword>
<keyword id="KW-0472">Membrane</keyword>
<keyword id="KW-1185">Reference proteome</keyword>
<keyword id="KW-0764">Sulfate transport</keyword>
<keyword id="KW-0812">Transmembrane</keyword>
<keyword id="KW-1133">Transmembrane helix</keyword>
<keyword id="KW-0813">Transport</keyword>
<comment type="subcellular location">
    <subcellularLocation>
        <location evidence="3">Cell membrane</location>
        <topology evidence="3">Multi-pass membrane protein</topology>
    </subcellularLocation>
</comment>
<comment type="similarity">
    <text evidence="3">Belongs to the SLC26A/SulP transporter (TC 2.A.53) family.</text>
</comment>
<protein>
    <recommendedName>
        <fullName>Probable sulfate transporter MT1781</fullName>
    </recommendedName>
</protein>
<reference key="1">
    <citation type="journal article" date="2002" name="J. Bacteriol.">
        <title>Whole-genome comparison of Mycobacterium tuberculosis clinical and laboratory strains.</title>
        <authorList>
            <person name="Fleischmann R.D."/>
            <person name="Alland D."/>
            <person name="Eisen J.A."/>
            <person name="Carpenter L."/>
            <person name="White O."/>
            <person name="Peterson J.D."/>
            <person name="DeBoy R.T."/>
            <person name="Dodson R.J."/>
            <person name="Gwinn M.L."/>
            <person name="Haft D.H."/>
            <person name="Hickey E.K."/>
            <person name="Kolonay J.F."/>
            <person name="Nelson W.C."/>
            <person name="Umayam L.A."/>
            <person name="Ermolaeva M.D."/>
            <person name="Salzberg S.L."/>
            <person name="Delcher A."/>
            <person name="Utterback T.R."/>
            <person name="Weidman J.F."/>
            <person name="Khouri H.M."/>
            <person name="Gill J."/>
            <person name="Mikula A."/>
            <person name="Bishai W."/>
            <person name="Jacobs W.R. Jr."/>
            <person name="Venter J.C."/>
            <person name="Fraser C.M."/>
        </authorList>
    </citation>
    <scope>NUCLEOTIDE SEQUENCE [LARGE SCALE GENOMIC DNA]</scope>
    <source>
        <strain>CDC 1551 / Oshkosh</strain>
    </source>
</reference>